<comment type="function">
    <text evidence="1">Plays a role in viral particle release. Presumably acts by facilitating the fission of the virion bud at the cell surface.</text>
</comment>
<comment type="subcellular location">
    <subcellularLocation>
        <location evidence="1 2">Host cell membrane</location>
        <topology evidence="1">Single-pass membrane protein</topology>
    </subcellularLocation>
</comment>
<comment type="alternative products">
    <event type="alternative initiation"/>
    <isoform>
        <id>P0DOH2-1</id>
        <name>Glyco-Gag protein</name>
        <sequence type="displayed"/>
    </isoform>
    <isoform>
        <id>P03340-1</id>
        <name>Gag polyprotein</name>
        <sequence type="external"/>
    </isoform>
</comment>
<comment type="PTM">
    <text evidence="1">Glycosylated by host.</text>
</comment>
<comment type="PTM">
    <text evidence="1">Cleaved by host near the middle of the molecule, releasing the c-terminal half containing capsid and nucleoprotein domains op GAG.</text>
</comment>
<proteinExistence type="inferred from homology"/>
<evidence type="ECO:0000250" key="1">
    <source>
        <dbReference type="UniProtKB" id="P0DOG8"/>
    </source>
</evidence>
<evidence type="ECO:0000255" key="2"/>
<evidence type="ECO:0000255" key="3">
    <source>
        <dbReference type="PROSITE-ProRule" id="PRU00498"/>
    </source>
</evidence>
<evidence type="ECO:0000256" key="4">
    <source>
        <dbReference type="SAM" id="MobiDB-lite"/>
    </source>
</evidence>
<evidence type="ECO:0000305" key="5"/>
<reference key="1">
    <citation type="journal article" date="1984" name="Proc. Natl. Acad. Sci. U.S.A.">
        <title>Nucleotide sequence of the feline retroviral oncogene v-fms shows unexpected homology with oncogenes encoding tyrosine-specific protein kinases.</title>
        <authorList>
            <person name="Hampe A."/>
            <person name="Gobet M."/>
            <person name="Sherr C.J."/>
            <person name="Galibert F."/>
        </authorList>
    </citation>
    <scope>NUCLEOTIDE SEQUENCE [GENOMIC RNA]</scope>
</reference>
<sequence>MSGASSGTATGARLFGISSVLGEYRVLIGDEGAGPSRSPSEVSFSVWYRSRAARLVILCLVASFLVPCLTFLIAETVMGQTVTTPPSLTLDHWSEVRTRAHNQGIEVRKKKWITLCEAEWVMMNVGWPREGTPPLDNTSQVEKRIFAPGPHGHPDQVPYITTWRSLATDPPSWVRPFLPPPKPPTPLPQPLSPQPSAPPTSSLYPVLPKTNPPKPPVLPPDPSSPLIDLLTEEPPPYPGGHGPPPSGLRTPAASPIASRLRERRENPAEESQALPLREGPNNRPQYWPFSASDLYNWKLHNPPFSQDPVALTNLIESILVTHQPTWDDCQQLLQALLTAEERQRVLLEARKQVPGEDGRPTQLPNVIDEAFPLTRPNWDFATPAGREHLRLYRQLLLAGLRGAARRPTNLAQVKQVVQGKEETPASFLERLKEAYRMYTPYDPEDPGQAASVILSFIYQSSPDIRNKLQRLEGLQGFTLSDLLKEAEKIYNKRETPEEREERLWQRQEERDKKRHKEMTKVLATVVTQNRNKDREE</sequence>
<accession>P0DOH2</accession>
<keyword id="KW-0024">Alternative initiation</keyword>
<keyword id="KW-0325">Glycoprotein</keyword>
<keyword id="KW-1032">Host cell membrane</keyword>
<keyword id="KW-1043">Host membrane</keyword>
<keyword id="KW-0472">Membrane</keyword>
<keyword id="KW-0812">Transmembrane</keyword>
<keyword id="KW-1133">Transmembrane helix</keyword>
<protein>
    <recommendedName>
        <fullName>Glyco-Gag protein</fullName>
    </recommendedName>
    <alternativeName>
        <fullName>Gross cell surface antigen</fullName>
    </alternativeName>
    <alternativeName>
        <fullName>glycosylated Pr80 gag</fullName>
        <shortName>gPr80 Gag</shortName>
        <shortName>gag-gPr80</shortName>
    </alternativeName>
</protein>
<dbReference type="EMBL" id="K01643">
    <property type="status" value="NOT_ANNOTATED_CDS"/>
    <property type="molecule type" value="Genomic_RNA"/>
</dbReference>
<dbReference type="SMR" id="P0DOH2"/>
<dbReference type="GO" id="GO:0020002">
    <property type="term" value="C:host cell plasma membrane"/>
    <property type="evidence" value="ECO:0007669"/>
    <property type="project" value="UniProtKB-SubCell"/>
</dbReference>
<dbReference type="GO" id="GO:0016020">
    <property type="term" value="C:membrane"/>
    <property type="evidence" value="ECO:0007669"/>
    <property type="project" value="UniProtKB-KW"/>
</dbReference>
<dbReference type="GO" id="GO:0019068">
    <property type="term" value="P:virion assembly"/>
    <property type="evidence" value="ECO:0007669"/>
    <property type="project" value="InterPro"/>
</dbReference>
<dbReference type="Gene3D" id="1.10.150.180">
    <property type="entry name" value="Gamma-retroviral matrix domain"/>
    <property type="match status" value="1"/>
</dbReference>
<dbReference type="Gene3D" id="1.10.375.10">
    <property type="entry name" value="Human Immunodeficiency Virus Type 1 Capsid Protein"/>
    <property type="match status" value="1"/>
</dbReference>
<dbReference type="InterPro" id="IPR000840">
    <property type="entry name" value="G_retro_matrix"/>
</dbReference>
<dbReference type="InterPro" id="IPR036946">
    <property type="entry name" value="G_retro_matrix_sf"/>
</dbReference>
<dbReference type="InterPro" id="IPR002079">
    <property type="entry name" value="Gag_p12"/>
</dbReference>
<dbReference type="InterPro" id="IPR003036">
    <property type="entry name" value="Gag_P30"/>
</dbReference>
<dbReference type="InterPro" id="IPR008919">
    <property type="entry name" value="Retrov_capsid_N"/>
</dbReference>
<dbReference type="InterPro" id="IPR050462">
    <property type="entry name" value="Retroviral_Gag-Pol_poly"/>
</dbReference>
<dbReference type="InterPro" id="IPR010999">
    <property type="entry name" value="Retrovr_matrix"/>
</dbReference>
<dbReference type="PANTHER" id="PTHR33166">
    <property type="entry name" value="GAG_P30 DOMAIN-CONTAINING PROTEIN"/>
    <property type="match status" value="1"/>
</dbReference>
<dbReference type="Pfam" id="PF01140">
    <property type="entry name" value="Gag_MA"/>
    <property type="match status" value="1"/>
</dbReference>
<dbReference type="Pfam" id="PF01141">
    <property type="entry name" value="Gag_p12"/>
    <property type="match status" value="1"/>
</dbReference>
<dbReference type="Pfam" id="PF02093">
    <property type="entry name" value="Gag_p30"/>
    <property type="match status" value="1"/>
</dbReference>
<dbReference type="SUPFAM" id="SSF47836">
    <property type="entry name" value="Retroviral matrix proteins"/>
    <property type="match status" value="1"/>
</dbReference>
<dbReference type="SUPFAM" id="SSF47943">
    <property type="entry name" value="Retrovirus capsid protein, N-terminal core domain"/>
    <property type="match status" value="1"/>
</dbReference>
<name>GGAG_FSVMD</name>
<organism>
    <name type="scientific">Feline sarcoma virus (strain McDonough)</name>
    <dbReference type="NCBI Taxonomy" id="11778"/>
    <lineage>
        <taxon>Viruses</taxon>
        <taxon>Riboviria</taxon>
        <taxon>Pararnavirae</taxon>
        <taxon>Artverviricota</taxon>
        <taxon>Revtraviricetes</taxon>
        <taxon>Ortervirales</taxon>
        <taxon>Retroviridae</taxon>
        <taxon>Orthoretrovirinae</taxon>
        <taxon>Gammaretrovirus</taxon>
        <taxon>Feline leukemia virus</taxon>
    </lineage>
</organism>
<organismHost>
    <name type="scientific">Felidae</name>
    <name type="common">cat family</name>
    <dbReference type="NCBI Taxonomy" id="9681"/>
</organismHost>
<feature type="chain" id="PRO_0000441136" description="Glyco-Gag protein">
    <location>
        <begin position="1"/>
        <end position="536"/>
    </location>
</feature>
<feature type="topological domain" description="Cytoplasmic" evidence="5">
    <location>
        <begin position="1"/>
        <end position="54"/>
    </location>
</feature>
<feature type="transmembrane region" description="Helical" evidence="2">
    <location>
        <begin position="55"/>
        <end position="75"/>
    </location>
</feature>
<feature type="topological domain" description="Extracellular" evidence="5">
    <location>
        <begin position="76"/>
        <end position="536"/>
    </location>
</feature>
<feature type="region of interest" description="Disordered" evidence="4">
    <location>
        <begin position="174"/>
        <end position="284"/>
    </location>
</feature>
<feature type="region of interest" description="Disordered" evidence="4">
    <location>
        <begin position="494"/>
        <end position="536"/>
    </location>
</feature>
<feature type="compositionally biased region" description="Pro residues" evidence="4">
    <location>
        <begin position="177"/>
        <end position="198"/>
    </location>
</feature>
<feature type="compositionally biased region" description="Low complexity" evidence="4">
    <location>
        <begin position="199"/>
        <end position="209"/>
    </location>
</feature>
<feature type="compositionally biased region" description="Pro residues" evidence="4">
    <location>
        <begin position="210"/>
        <end position="223"/>
    </location>
</feature>
<feature type="compositionally biased region" description="Pro residues" evidence="4">
    <location>
        <begin position="233"/>
        <end position="246"/>
    </location>
</feature>
<feature type="compositionally biased region" description="Basic and acidic residues" evidence="4">
    <location>
        <begin position="494"/>
        <end position="511"/>
    </location>
</feature>
<feature type="glycosylation site" description="N-linked (GlcNAc...) asparagine; by host" evidence="3">
    <location>
        <position position="137"/>
    </location>
</feature>